<gene>
    <name evidence="5" type="primary">ppk2</name>
    <name evidence="5" type="ordered locus">SPO1256</name>
</gene>
<organism>
    <name type="scientific">Ruegeria pomeroyi (strain ATCC 700808 / DSM 15171 / DSS-3)</name>
    <name type="common">Silicibacter pomeroyi</name>
    <dbReference type="NCBI Taxonomy" id="246200"/>
    <lineage>
        <taxon>Bacteria</taxon>
        <taxon>Pseudomonadati</taxon>
        <taxon>Pseudomonadota</taxon>
        <taxon>Alphaproteobacteria</taxon>
        <taxon>Rhodobacterales</taxon>
        <taxon>Roseobacteraceae</taxon>
        <taxon>Ruegeria</taxon>
    </lineage>
</organism>
<evidence type="ECO:0000256" key="1">
    <source>
        <dbReference type="SAM" id="MobiDB-lite"/>
    </source>
</evidence>
<evidence type="ECO:0000269" key="2">
    <source>
    </source>
</evidence>
<evidence type="ECO:0000303" key="3">
    <source>
    </source>
</evidence>
<evidence type="ECO:0000305" key="4"/>
<evidence type="ECO:0000312" key="5">
    <source>
        <dbReference type="EMBL" id="AAV94548.1"/>
    </source>
</evidence>
<accession>Q5LU04</accession>
<proteinExistence type="evidence at protein level"/>
<reference key="1">
    <citation type="journal article" date="2004" name="Nature">
        <title>Genome sequence of Silicibacter pomeroyi reveals adaptations to the marine environment.</title>
        <authorList>
            <person name="Moran M.A."/>
            <person name="Buchan A."/>
            <person name="Gonzalez J.M."/>
            <person name="Heidelberg J.F."/>
            <person name="Whitman W.B."/>
            <person name="Kiene R.P."/>
            <person name="Henriksen J.R."/>
            <person name="King G.M."/>
            <person name="Belas R."/>
            <person name="Fuqua C."/>
            <person name="Brinkac L.M."/>
            <person name="Lewis M."/>
            <person name="Johri S."/>
            <person name="Weaver B."/>
            <person name="Pai G."/>
            <person name="Eisen J.A."/>
            <person name="Rahe E."/>
            <person name="Sheldon W.M."/>
            <person name="Ye W."/>
            <person name="Miller T.R."/>
            <person name="Carlton J."/>
            <person name="Rasko D.A."/>
            <person name="Paulsen I.T."/>
            <person name="Ren Q."/>
            <person name="Daugherty S.C."/>
            <person name="DeBoy R.T."/>
            <person name="Dodson R.J."/>
            <person name="Durkin A.S."/>
            <person name="Madupu R."/>
            <person name="Nelson W.C."/>
            <person name="Sullivan S.A."/>
            <person name="Rosovitz M.J."/>
            <person name="Haft D.H."/>
            <person name="Selengut J."/>
            <person name="Ward N."/>
        </authorList>
    </citation>
    <scope>NUCLEOTIDE SEQUENCE [LARGE SCALE GENOMIC DNA]</scope>
    <source>
        <strain>ATCC 700808 / DSM 15171 / DSS-3</strain>
    </source>
</reference>
<reference key="2">
    <citation type="journal article" date="2014" name="Stand. Genomic Sci.">
        <title>An updated genome annotation for the model marine bacterium Ruegeria pomeroyi DSS-3.</title>
        <authorList>
            <person name="Rivers A.R."/>
            <person name="Smith C.B."/>
            <person name="Moran M.A."/>
        </authorList>
    </citation>
    <scope>GENOME REANNOTATION</scope>
    <source>
        <strain>ATCC 700808 / DSM 15171 / DSS-3</strain>
    </source>
</reference>
<reference key="3">
    <citation type="journal article" date="2014" name="Biotechnol. Lett.">
        <title>Degradation of polyphosphates by polyphosphate kinases from Ruegeria pomeroyi.</title>
        <authorList>
            <person name="Achbergerova L."/>
            <person name="Nahalka J."/>
        </authorList>
    </citation>
    <scope>FUNCTION</scope>
    <scope>CATALYTIC ACTIVITY</scope>
    <scope>COFACTOR</scope>
    <scope>BIOPHYSICOCHEMICAL PROPERTIES</scope>
    <source>
        <strain>ATCC 700808 / DSM 15171 / DSS-3</strain>
    </source>
</reference>
<name>PK21B_RUEPO</name>
<protein>
    <recommendedName>
        <fullName evidence="4">NDP-polyphosphate phosphotransferase 2</fullName>
        <ecNumber evidence="2">2.7.4.-</ecNumber>
    </recommendedName>
    <alternativeName>
        <fullName evidence="4">Polyphosphate kinase PPK2 2</fullName>
    </alternativeName>
    <alternativeName>
        <fullName evidence="3">RpPPK2-2</fullName>
    </alternativeName>
</protein>
<feature type="chain" id="PRO_0000442594" description="NDP-polyphosphate phosphotransferase 2">
    <location>
        <begin position="1"/>
        <end position="344"/>
    </location>
</feature>
<feature type="region of interest" description="Disordered" evidence="1">
    <location>
        <begin position="1"/>
        <end position="60"/>
    </location>
</feature>
<comment type="function">
    <text evidence="2">Uses inorganic polyphosphate (polyP) as a donor to convert NDP to NTP. PolyP hydrolysis is slightly faster with ADP, but it can also use GDP, CDP and UDP.</text>
</comment>
<comment type="catalytic activity">
    <reaction evidence="2">
        <text>[phosphate](n) + ATP = [phosphate](n+1) + ADP</text>
        <dbReference type="Rhea" id="RHEA:19573"/>
        <dbReference type="Rhea" id="RHEA-COMP:9859"/>
        <dbReference type="Rhea" id="RHEA-COMP:14280"/>
        <dbReference type="ChEBI" id="CHEBI:16838"/>
        <dbReference type="ChEBI" id="CHEBI:30616"/>
        <dbReference type="ChEBI" id="CHEBI:456216"/>
    </reaction>
</comment>
<comment type="catalytic activity">
    <reaction evidence="2">
        <text>[phosphate](n) + CTP = [phosphate](n+1) + CDP</text>
        <dbReference type="Rhea" id="RHEA:55408"/>
        <dbReference type="Rhea" id="RHEA-COMP:9859"/>
        <dbReference type="Rhea" id="RHEA-COMP:14280"/>
        <dbReference type="ChEBI" id="CHEBI:16838"/>
        <dbReference type="ChEBI" id="CHEBI:37563"/>
        <dbReference type="ChEBI" id="CHEBI:58069"/>
    </reaction>
</comment>
<comment type="catalytic activity">
    <reaction evidence="2">
        <text>[phosphate](n) + GTP = [phosphate](n+1) + GDP</text>
        <dbReference type="Rhea" id="RHEA:55412"/>
        <dbReference type="Rhea" id="RHEA-COMP:9859"/>
        <dbReference type="Rhea" id="RHEA-COMP:14280"/>
        <dbReference type="ChEBI" id="CHEBI:16838"/>
        <dbReference type="ChEBI" id="CHEBI:37565"/>
        <dbReference type="ChEBI" id="CHEBI:58189"/>
    </reaction>
</comment>
<comment type="catalytic activity">
    <reaction evidence="2">
        <text>[phosphate](n) + UTP = [phosphate](n+1) + UDP</text>
        <dbReference type="Rhea" id="RHEA:55404"/>
        <dbReference type="Rhea" id="RHEA-COMP:9859"/>
        <dbReference type="Rhea" id="RHEA-COMP:14280"/>
        <dbReference type="ChEBI" id="CHEBI:16838"/>
        <dbReference type="ChEBI" id="CHEBI:46398"/>
        <dbReference type="ChEBI" id="CHEBI:58223"/>
    </reaction>
</comment>
<comment type="cofactor">
    <cofactor evidence="2">
        <name>Mg(2+)</name>
        <dbReference type="ChEBI" id="CHEBI:18420"/>
    </cofactor>
</comment>
<comment type="biophysicochemical properties">
    <kinetics>
        <KM evidence="2">2.5 mM for ADP</KM>
        <text evidence="2">kcat is 313 min(-1) with ADP as substrate.</text>
    </kinetics>
    <phDependence>
        <text evidence="2">Optimum pH is 9.</text>
    </phDependence>
</comment>
<comment type="similarity">
    <text evidence="4">Belongs to the polyphosphate kinase 2 (PPK2) family. Class I subfamily.</text>
</comment>
<dbReference type="EC" id="2.7.4.-" evidence="2"/>
<dbReference type="EMBL" id="CP000031">
    <property type="protein sequence ID" value="AAV94548.1"/>
    <property type="molecule type" value="Genomic_DNA"/>
</dbReference>
<dbReference type="SMR" id="Q5LU04"/>
<dbReference type="STRING" id="246200.SPO1256"/>
<dbReference type="PaxDb" id="246200-SPO1256"/>
<dbReference type="KEGG" id="sil:SPO1256"/>
<dbReference type="eggNOG" id="COG2326">
    <property type="taxonomic scope" value="Bacteria"/>
</dbReference>
<dbReference type="HOGENOM" id="CLU_048699_0_1_5"/>
<dbReference type="BRENDA" id="2.7.4.1">
    <property type="organism ID" value="8123"/>
</dbReference>
<dbReference type="Proteomes" id="UP000001023">
    <property type="component" value="Chromosome"/>
</dbReference>
<dbReference type="GO" id="GO:0008976">
    <property type="term" value="F:polyphosphate kinase activity"/>
    <property type="evidence" value="ECO:0007669"/>
    <property type="project" value="UniProtKB-EC"/>
</dbReference>
<dbReference type="GO" id="GO:0006793">
    <property type="term" value="P:phosphorus metabolic process"/>
    <property type="evidence" value="ECO:0007669"/>
    <property type="project" value="InterPro"/>
</dbReference>
<dbReference type="FunFam" id="3.40.50.300:FF:002388">
    <property type="entry name" value="Polyphosphate:NDP phosphotransferase 2"/>
    <property type="match status" value="1"/>
</dbReference>
<dbReference type="Gene3D" id="3.40.50.300">
    <property type="entry name" value="P-loop containing nucleotide triphosphate hydrolases"/>
    <property type="match status" value="1"/>
</dbReference>
<dbReference type="InterPro" id="IPR027417">
    <property type="entry name" value="P-loop_NTPase"/>
</dbReference>
<dbReference type="InterPro" id="IPR022488">
    <property type="entry name" value="PPK2-related"/>
</dbReference>
<dbReference type="InterPro" id="IPR022486">
    <property type="entry name" value="PPK2_PA0141"/>
</dbReference>
<dbReference type="NCBIfam" id="TIGR03707">
    <property type="entry name" value="PPK2_P_aer"/>
    <property type="match status" value="1"/>
</dbReference>
<dbReference type="PANTHER" id="PTHR34383:SF1">
    <property type="entry name" value="ADP-POLYPHOSPHATE PHOSPHOTRANSFERASE"/>
    <property type="match status" value="1"/>
</dbReference>
<dbReference type="PANTHER" id="PTHR34383">
    <property type="entry name" value="POLYPHOSPHATE:AMP PHOSPHOTRANSFERASE-RELATED"/>
    <property type="match status" value="1"/>
</dbReference>
<dbReference type="Pfam" id="PF03976">
    <property type="entry name" value="PPK2"/>
    <property type="match status" value="1"/>
</dbReference>
<dbReference type="SUPFAM" id="SSF52540">
    <property type="entry name" value="P-loop containing nucleoside triphosphate hydrolases"/>
    <property type="match status" value="1"/>
</dbReference>
<sequence>METAKPIAPQKDSKANGVDATDPVVKVASPQDPAGDAKVEDATAPVAEVEPRTPRNRRLPTPENVRHAFESGKYPYSRKMSRRPYEAEKAMLQAELLKVQLWAQETGERFVLLFEGRDAAGKGGTIKRFMEHLNPRQARVVALNKPTWEEKGQWYYQRYVQELPTVGEMVFYDRSWYNRAGVERVMGFCTPNEYLEFMRQTPDLERMLVRSGIRLYKYWFSVTQEEQQRRFKSRETDPLKQWKLSPIDKASLDKWDDYTEAKEAMFFYTDTADAPWTIIKSNDKKRARLNCMRHFLSTIDYPGKDKHVVGEPDPLIVGRAHHVIQKSEHILGTALHPDQRARQD</sequence>
<keyword id="KW-0418">Kinase</keyword>
<keyword id="KW-1185">Reference proteome</keyword>
<keyword id="KW-0808">Transferase</keyword>